<keyword id="KW-0002">3D-structure</keyword>
<keyword id="KW-0025">Alternative splicing</keyword>
<keyword id="KW-1003">Cell membrane</keyword>
<keyword id="KW-0984">Congenital hypothyroidism</keyword>
<keyword id="KW-0968">Cytoplasmic vesicle</keyword>
<keyword id="KW-0225">Disease variant</keyword>
<keyword id="KW-0285">Flavoprotein</keyword>
<keyword id="KW-0288">FMN</keyword>
<keyword id="KW-0472">Membrane</keyword>
<keyword id="KW-0521">NADP</keyword>
<keyword id="KW-0560">Oxidoreductase</keyword>
<keyword id="KW-1267">Proteomics identification</keyword>
<keyword id="KW-1185">Reference proteome</keyword>
<keyword id="KW-0812">Transmembrane</keyword>
<keyword id="KW-1133">Transmembrane helix</keyword>
<reference key="1">
    <citation type="journal article" date="2002" name="J. Endocrinol. Invest. 25 Suppl.">
        <title>Cloning and characterization of a novel thyroidal gene encoding proteins with a conserved nitroreductase domain.</title>
        <authorList>
            <person name="Moreno J.C."/>
            <person name="Keijser R."/>
            <person name="Aarraas S."/>
            <person name="De Vijlder J.J.M."/>
            <person name="Ris-Stalpers C."/>
        </authorList>
    </citation>
    <scope>NUCLEOTIDE SEQUENCE [MRNA] (ISOFORMS 1; 4 AND 5)</scope>
    <source>
        <tissue>Thyroid</tissue>
    </source>
</reference>
<reference key="2">
    <citation type="submission" date="2003-09" db="EMBL/GenBank/DDBJ databases">
        <title>Cloning and characterization of the human iodotyrosine dehalogenase isoform 1C.</title>
        <authorList>
            <person name="Gnidehou S."/>
            <person name="Ohayon R."/>
            <person name="Kaniewski J."/>
            <person name="Morand S."/>
            <person name="Noel-Hudson M.-S."/>
            <person name="Virion A."/>
            <person name="Dupuy C."/>
        </authorList>
    </citation>
    <scope>NUCLEOTIDE SEQUENCE [MRNA] (ISOFORM 6)</scope>
    <source>
        <tissue>Thyroid</tissue>
    </source>
</reference>
<reference key="3">
    <citation type="submission" date="2005-03" db="EMBL/GenBank/DDBJ databases">
        <title>New transcript variants of the human iodotyrosine dehalogenase gene.</title>
        <authorList>
            <person name="Rodrigues-Serpa A.R."/>
            <person name="Laires R.S."/>
            <person name="Monteiro C."/>
        </authorList>
    </citation>
    <scope>NUCLEOTIDE SEQUENCE [MRNA] (ISOFORMS 3 AND 7)</scope>
    <source>
        <tissue>Thyroid</tissue>
    </source>
</reference>
<reference key="4">
    <citation type="journal article" date="2003" name="Nature">
        <title>The DNA sequence and analysis of human chromosome 6.</title>
        <authorList>
            <person name="Mungall A.J."/>
            <person name="Palmer S.A."/>
            <person name="Sims S.K."/>
            <person name="Edwards C.A."/>
            <person name="Ashurst J.L."/>
            <person name="Wilming L."/>
            <person name="Jones M.C."/>
            <person name="Horton R."/>
            <person name="Hunt S.E."/>
            <person name="Scott C.E."/>
            <person name="Gilbert J.G.R."/>
            <person name="Clamp M.E."/>
            <person name="Bethel G."/>
            <person name="Milne S."/>
            <person name="Ainscough R."/>
            <person name="Almeida J.P."/>
            <person name="Ambrose K.D."/>
            <person name="Andrews T.D."/>
            <person name="Ashwell R.I.S."/>
            <person name="Babbage A.K."/>
            <person name="Bagguley C.L."/>
            <person name="Bailey J."/>
            <person name="Banerjee R."/>
            <person name="Barker D.J."/>
            <person name="Barlow K.F."/>
            <person name="Bates K."/>
            <person name="Beare D.M."/>
            <person name="Beasley H."/>
            <person name="Beasley O."/>
            <person name="Bird C.P."/>
            <person name="Blakey S.E."/>
            <person name="Bray-Allen S."/>
            <person name="Brook J."/>
            <person name="Brown A.J."/>
            <person name="Brown J.Y."/>
            <person name="Burford D.C."/>
            <person name="Burrill W."/>
            <person name="Burton J."/>
            <person name="Carder C."/>
            <person name="Carter N.P."/>
            <person name="Chapman J.C."/>
            <person name="Clark S.Y."/>
            <person name="Clark G."/>
            <person name="Clee C.M."/>
            <person name="Clegg S."/>
            <person name="Cobley V."/>
            <person name="Collier R.E."/>
            <person name="Collins J.E."/>
            <person name="Colman L.K."/>
            <person name="Corby N.R."/>
            <person name="Coville G.J."/>
            <person name="Culley K.M."/>
            <person name="Dhami P."/>
            <person name="Davies J."/>
            <person name="Dunn M."/>
            <person name="Earthrowl M.E."/>
            <person name="Ellington A.E."/>
            <person name="Evans K.A."/>
            <person name="Faulkner L."/>
            <person name="Francis M.D."/>
            <person name="Frankish A."/>
            <person name="Frankland J."/>
            <person name="French L."/>
            <person name="Garner P."/>
            <person name="Garnett J."/>
            <person name="Ghori M.J."/>
            <person name="Gilby L.M."/>
            <person name="Gillson C.J."/>
            <person name="Glithero R.J."/>
            <person name="Grafham D.V."/>
            <person name="Grant M."/>
            <person name="Gribble S."/>
            <person name="Griffiths C."/>
            <person name="Griffiths M.N.D."/>
            <person name="Hall R."/>
            <person name="Halls K.S."/>
            <person name="Hammond S."/>
            <person name="Harley J.L."/>
            <person name="Hart E.A."/>
            <person name="Heath P.D."/>
            <person name="Heathcott R."/>
            <person name="Holmes S.J."/>
            <person name="Howden P.J."/>
            <person name="Howe K.L."/>
            <person name="Howell G.R."/>
            <person name="Huckle E."/>
            <person name="Humphray S.J."/>
            <person name="Humphries M.D."/>
            <person name="Hunt A.R."/>
            <person name="Johnson C.M."/>
            <person name="Joy A.A."/>
            <person name="Kay M."/>
            <person name="Keenan S.J."/>
            <person name="Kimberley A.M."/>
            <person name="King A."/>
            <person name="Laird G.K."/>
            <person name="Langford C."/>
            <person name="Lawlor S."/>
            <person name="Leongamornlert D.A."/>
            <person name="Leversha M."/>
            <person name="Lloyd C.R."/>
            <person name="Lloyd D.M."/>
            <person name="Loveland J.E."/>
            <person name="Lovell J."/>
            <person name="Martin S."/>
            <person name="Mashreghi-Mohammadi M."/>
            <person name="Maslen G.L."/>
            <person name="Matthews L."/>
            <person name="McCann O.T."/>
            <person name="McLaren S.J."/>
            <person name="McLay K."/>
            <person name="McMurray A."/>
            <person name="Moore M.J.F."/>
            <person name="Mullikin J.C."/>
            <person name="Niblett D."/>
            <person name="Nickerson T."/>
            <person name="Novik K.L."/>
            <person name="Oliver K."/>
            <person name="Overton-Larty E.K."/>
            <person name="Parker A."/>
            <person name="Patel R."/>
            <person name="Pearce A.V."/>
            <person name="Peck A.I."/>
            <person name="Phillimore B.J.C.T."/>
            <person name="Phillips S."/>
            <person name="Plumb R.W."/>
            <person name="Porter K.M."/>
            <person name="Ramsey Y."/>
            <person name="Ranby S.A."/>
            <person name="Rice C.M."/>
            <person name="Ross M.T."/>
            <person name="Searle S.M."/>
            <person name="Sehra H.K."/>
            <person name="Sheridan E."/>
            <person name="Skuce C.D."/>
            <person name="Smith S."/>
            <person name="Smith M."/>
            <person name="Spraggon L."/>
            <person name="Squares S.L."/>
            <person name="Steward C.A."/>
            <person name="Sycamore N."/>
            <person name="Tamlyn-Hall G."/>
            <person name="Tester J."/>
            <person name="Theaker A.J."/>
            <person name="Thomas D.W."/>
            <person name="Thorpe A."/>
            <person name="Tracey A."/>
            <person name="Tromans A."/>
            <person name="Tubby B."/>
            <person name="Wall M."/>
            <person name="Wallis J.M."/>
            <person name="West A.P."/>
            <person name="White S.S."/>
            <person name="Whitehead S.L."/>
            <person name="Whittaker H."/>
            <person name="Wild A."/>
            <person name="Willey D.J."/>
            <person name="Wilmer T.E."/>
            <person name="Wood J.M."/>
            <person name="Wray P.W."/>
            <person name="Wyatt J.C."/>
            <person name="Young L."/>
            <person name="Younger R.M."/>
            <person name="Bentley D.R."/>
            <person name="Coulson A."/>
            <person name="Durbin R.M."/>
            <person name="Hubbard T."/>
            <person name="Sulston J.E."/>
            <person name="Dunham I."/>
            <person name="Rogers J."/>
            <person name="Beck S."/>
        </authorList>
    </citation>
    <scope>NUCLEOTIDE SEQUENCE [LARGE SCALE GENOMIC DNA]</scope>
</reference>
<reference key="5">
    <citation type="journal article" date="2004" name="Genome Res.">
        <title>The status, quality, and expansion of the NIH full-length cDNA project: the Mammalian Gene Collection (MGC).</title>
        <authorList>
            <consortium name="The MGC Project Team"/>
        </authorList>
    </citation>
    <scope>NUCLEOTIDE SEQUENCE [LARGE SCALE MRNA] (ISOFORM 1)</scope>
    <scope>VARIANT PRO-260</scope>
    <source>
        <tissue>Kidney</tissue>
    </source>
</reference>
<reference key="6">
    <citation type="journal article" date="2004" name="Nat. Genet.">
        <title>Complete sequencing and characterization of 21,243 full-length human cDNAs.</title>
        <authorList>
            <person name="Ota T."/>
            <person name="Suzuki Y."/>
            <person name="Nishikawa T."/>
            <person name="Otsuki T."/>
            <person name="Sugiyama T."/>
            <person name="Irie R."/>
            <person name="Wakamatsu A."/>
            <person name="Hayashi K."/>
            <person name="Sato H."/>
            <person name="Nagai K."/>
            <person name="Kimura K."/>
            <person name="Makita H."/>
            <person name="Sekine M."/>
            <person name="Obayashi M."/>
            <person name="Nishi T."/>
            <person name="Shibahara T."/>
            <person name="Tanaka T."/>
            <person name="Ishii S."/>
            <person name="Yamamoto J."/>
            <person name="Saito K."/>
            <person name="Kawai Y."/>
            <person name="Isono Y."/>
            <person name="Nakamura Y."/>
            <person name="Nagahari K."/>
            <person name="Murakami K."/>
            <person name="Yasuda T."/>
            <person name="Iwayanagi T."/>
            <person name="Wagatsuma M."/>
            <person name="Shiratori A."/>
            <person name="Sudo H."/>
            <person name="Hosoiri T."/>
            <person name="Kaku Y."/>
            <person name="Kodaira H."/>
            <person name="Kondo H."/>
            <person name="Sugawara M."/>
            <person name="Takahashi M."/>
            <person name="Kanda K."/>
            <person name="Yokoi T."/>
            <person name="Furuya T."/>
            <person name="Kikkawa E."/>
            <person name="Omura Y."/>
            <person name="Abe K."/>
            <person name="Kamihara K."/>
            <person name="Katsuta N."/>
            <person name="Sato K."/>
            <person name="Tanikawa M."/>
            <person name="Yamazaki M."/>
            <person name="Ninomiya K."/>
            <person name="Ishibashi T."/>
            <person name="Yamashita H."/>
            <person name="Murakawa K."/>
            <person name="Fujimori K."/>
            <person name="Tanai H."/>
            <person name="Kimata M."/>
            <person name="Watanabe M."/>
            <person name="Hiraoka S."/>
            <person name="Chiba Y."/>
            <person name="Ishida S."/>
            <person name="Ono Y."/>
            <person name="Takiguchi S."/>
            <person name="Watanabe S."/>
            <person name="Yosida M."/>
            <person name="Hotuta T."/>
            <person name="Kusano J."/>
            <person name="Kanehori K."/>
            <person name="Takahashi-Fujii A."/>
            <person name="Hara H."/>
            <person name="Tanase T.-O."/>
            <person name="Nomura Y."/>
            <person name="Togiya S."/>
            <person name="Komai F."/>
            <person name="Hara R."/>
            <person name="Takeuchi K."/>
            <person name="Arita M."/>
            <person name="Imose N."/>
            <person name="Musashino K."/>
            <person name="Yuuki H."/>
            <person name="Oshima A."/>
            <person name="Sasaki N."/>
            <person name="Aotsuka S."/>
            <person name="Yoshikawa Y."/>
            <person name="Matsunawa H."/>
            <person name="Ichihara T."/>
            <person name="Shiohata N."/>
            <person name="Sano S."/>
            <person name="Moriya S."/>
            <person name="Momiyama H."/>
            <person name="Satoh N."/>
            <person name="Takami S."/>
            <person name="Terashima Y."/>
            <person name="Suzuki O."/>
            <person name="Nakagawa S."/>
            <person name="Senoh A."/>
            <person name="Mizoguchi H."/>
            <person name="Goto Y."/>
            <person name="Shimizu F."/>
            <person name="Wakebe H."/>
            <person name="Hishigaki H."/>
            <person name="Watanabe T."/>
            <person name="Sugiyama A."/>
            <person name="Takemoto M."/>
            <person name="Kawakami B."/>
            <person name="Yamazaki M."/>
            <person name="Watanabe K."/>
            <person name="Kumagai A."/>
            <person name="Itakura S."/>
            <person name="Fukuzumi Y."/>
            <person name="Fujimori Y."/>
            <person name="Komiyama M."/>
            <person name="Tashiro H."/>
            <person name="Tanigami A."/>
            <person name="Fujiwara T."/>
            <person name="Ono T."/>
            <person name="Yamada K."/>
            <person name="Fujii Y."/>
            <person name="Ozaki K."/>
            <person name="Hirao M."/>
            <person name="Ohmori Y."/>
            <person name="Kawabata A."/>
            <person name="Hikiji T."/>
            <person name="Kobatake N."/>
            <person name="Inagaki H."/>
            <person name="Ikema Y."/>
            <person name="Okamoto S."/>
            <person name="Okitani R."/>
            <person name="Kawakami T."/>
            <person name="Noguchi S."/>
            <person name="Itoh T."/>
            <person name="Shigeta K."/>
            <person name="Senba T."/>
            <person name="Matsumura K."/>
            <person name="Nakajima Y."/>
            <person name="Mizuno T."/>
            <person name="Morinaga M."/>
            <person name="Sasaki M."/>
            <person name="Togashi T."/>
            <person name="Oyama M."/>
            <person name="Hata H."/>
            <person name="Watanabe M."/>
            <person name="Komatsu T."/>
            <person name="Mizushima-Sugano J."/>
            <person name="Satoh T."/>
            <person name="Shirai Y."/>
            <person name="Takahashi Y."/>
            <person name="Nakagawa K."/>
            <person name="Okumura K."/>
            <person name="Nagase T."/>
            <person name="Nomura N."/>
            <person name="Kikuchi H."/>
            <person name="Masuho Y."/>
            <person name="Yamashita R."/>
            <person name="Nakai K."/>
            <person name="Yada T."/>
            <person name="Nakamura Y."/>
            <person name="Ohara O."/>
            <person name="Isogai T."/>
            <person name="Sugano S."/>
        </authorList>
    </citation>
    <scope>NUCLEOTIDE SEQUENCE [LARGE SCALE MRNA] OF 11-289 (ISOFORM 1)</scope>
    <source>
        <tissue>Kidney</tissue>
    </source>
</reference>
<reference key="7">
    <citation type="journal article" date="2004" name="FASEB J.">
        <title>Iodotyrosine dehalogenase 1 (DEHAL1) is a transmembrane protein involved in the recycling of iodide close to the thyroglobulin iodination site.</title>
        <authorList>
            <person name="Gnidehou S."/>
            <person name="Caillou B."/>
            <person name="Talbot M."/>
            <person name="Ohayon R."/>
            <person name="Kaniewski J."/>
            <person name="Noel-Hudson M.-S."/>
            <person name="Morand S."/>
            <person name="Agnangji D."/>
            <person name="Sezan A."/>
            <person name="Courtin F."/>
            <person name="Virion A."/>
            <person name="Dupuy C."/>
        </authorList>
    </citation>
    <scope>FUNCTION</scope>
    <scope>CATALYTIC ACTIVITY</scope>
    <scope>BIOPHYSICOCHEMICAL PROPERTIES</scope>
    <scope>TISSUE SPECIFICITY</scope>
    <scope>SUBCELLULAR LOCATION</scope>
</reference>
<reference key="8">
    <citation type="journal article" date="2014" name="J. Proteomics">
        <title>An enzyme assisted RP-RPLC approach for in-depth analysis of human liver phosphoproteome.</title>
        <authorList>
            <person name="Bian Y."/>
            <person name="Song C."/>
            <person name="Cheng K."/>
            <person name="Dong M."/>
            <person name="Wang F."/>
            <person name="Huang J."/>
            <person name="Sun D."/>
            <person name="Wang L."/>
            <person name="Ye M."/>
            <person name="Zou H."/>
        </authorList>
    </citation>
    <scope>IDENTIFICATION BY MASS SPECTROMETRY [LARGE SCALE ANALYSIS]</scope>
    <source>
        <tissue>Liver</tissue>
    </source>
</reference>
<reference key="9">
    <citation type="journal article" date="2017" name="Biochemistry">
        <title>Active Site Binding Is Not Sufficient for Reductive Deiodination by Iodotyrosine Deiodinase.</title>
        <authorList>
            <person name="Ingavat N."/>
            <person name="Kavran J.M."/>
            <person name="Sun Z."/>
            <person name="Rokita S.E."/>
        </authorList>
    </citation>
    <scope>FUNCTION</scope>
    <scope>CATALYTIC ACTIVITY</scope>
    <scope>COFACTOR</scope>
    <scope>BIOPHYSICOCHEMICAL PROPERTIES</scope>
</reference>
<reference evidence="15 16" key="10">
    <citation type="journal article" date="2015" name="J. Biol. Chem.">
        <title>A switch between one- and two-electron chemistry of the human flavoprotein iodotyrosine deiodinase is controlled by substrate.</title>
        <authorList>
            <person name="Hu J."/>
            <person name="Chuenchor W."/>
            <person name="Rokita S.E."/>
        </authorList>
    </citation>
    <scope>X-RAY CRYSTALLOGRAPHY (2.45 ANGSTROMS) OF 32-289 IN COMPLEX WITH 3-IODO-L-TYROSINE AND FMN</scope>
    <scope>FUNCTION</scope>
    <scope>CATALYTIC ACTIVITY</scope>
    <scope>COFACTOR</scope>
    <scope>SUBUNIT</scope>
</reference>
<reference key="11">
    <citation type="journal article" date="2008" name="N. Engl. J. Med.">
        <title>Mutations in the iodotyrosine deiodinase gene and hypothyroidism.</title>
        <authorList>
            <person name="Moreno J.C."/>
            <person name="Klootwijk W."/>
            <person name="van Toor H."/>
            <person name="Pinto G."/>
            <person name="D'Alessandro M."/>
            <person name="Leger A."/>
            <person name="Goudie D."/>
            <person name="Polak M."/>
            <person name="Grueters A."/>
            <person name="Visser T.J."/>
        </authorList>
    </citation>
    <scope>VARIANTS TDH4 TRP-101; 105-PHE-ILE-106 DELINS LEU AND THR-116</scope>
    <scope>CHARACTERIZATION OF VARIANTS TDH4 TRP-101; 105-PHE-ILE-106 DELINS LEU AND THR-116</scope>
    <scope>MUTAGENESIS OF ARG-101; PHE-105 AND ILE-116</scope>
    <scope>CATALYTIC ACTIVITY</scope>
    <scope>FUNCTION</scope>
</reference>
<dbReference type="EC" id="1.21.1.1" evidence="4 6 7 8"/>
<dbReference type="EMBL" id="AY259176">
    <property type="protein sequence ID" value="AAP22072.1"/>
    <property type="molecule type" value="mRNA"/>
</dbReference>
<dbReference type="EMBL" id="AY259177">
    <property type="protein sequence ID" value="AAP22073.1"/>
    <property type="molecule type" value="mRNA"/>
</dbReference>
<dbReference type="EMBL" id="AY424901">
    <property type="protein sequence ID" value="AAR84259.1"/>
    <property type="molecule type" value="mRNA"/>
</dbReference>
<dbReference type="EMBL" id="AY424902">
    <property type="protein sequence ID" value="AAR84260.1"/>
    <property type="molecule type" value="mRNA"/>
</dbReference>
<dbReference type="EMBL" id="AY957659">
    <property type="protein sequence ID" value="AAY41465.1"/>
    <property type="molecule type" value="mRNA"/>
</dbReference>
<dbReference type="EMBL" id="AY957660">
    <property type="protein sequence ID" value="AAY41466.1"/>
    <property type="molecule type" value="mRNA"/>
</dbReference>
<dbReference type="EMBL" id="AY957661">
    <property type="protein sequence ID" value="AAY41467.1"/>
    <property type="status" value="ALT_SEQ"/>
    <property type="molecule type" value="mRNA"/>
</dbReference>
<dbReference type="EMBL" id="AL031010">
    <property type="status" value="NOT_ANNOTATED_CDS"/>
    <property type="molecule type" value="Genomic_DNA"/>
</dbReference>
<dbReference type="EMBL" id="BC056253">
    <property type="protein sequence ID" value="AAH56253.1"/>
    <property type="molecule type" value="mRNA"/>
</dbReference>
<dbReference type="EMBL" id="AK129950">
    <property type="protein sequence ID" value="BAC85255.1"/>
    <property type="status" value="ALT_INIT"/>
    <property type="molecule type" value="mRNA"/>
</dbReference>
<dbReference type="CCDS" id="CCDS5227.1">
    <molecule id="Q6PHW0-1"/>
</dbReference>
<dbReference type="CCDS" id="CCDS55066.1">
    <molecule id="Q6PHW0-3"/>
</dbReference>
<dbReference type="CCDS" id="CCDS55067.1">
    <molecule id="Q6PHW0-4"/>
</dbReference>
<dbReference type="RefSeq" id="NP_001158166.1">
    <molecule id="Q6PHW0-4"/>
    <property type="nucleotide sequence ID" value="NM_001164694.2"/>
</dbReference>
<dbReference type="RefSeq" id="NP_001158167.1">
    <molecule id="Q6PHW0-3"/>
    <property type="nucleotide sequence ID" value="NM_001164695.2"/>
</dbReference>
<dbReference type="RefSeq" id="NP_001305424.1">
    <property type="nucleotide sequence ID" value="NM_001318495.1"/>
</dbReference>
<dbReference type="RefSeq" id="NP_981932.1">
    <molecule id="Q6PHW0-1"/>
    <property type="nucleotide sequence ID" value="NM_203395.3"/>
</dbReference>
<dbReference type="PDB" id="4TTB">
    <property type="method" value="X-ray"/>
    <property type="resolution" value="2.45 A"/>
    <property type="chains" value="A/B=32-289"/>
</dbReference>
<dbReference type="PDB" id="4TTC">
    <property type="method" value="X-ray"/>
    <property type="resolution" value="2.65 A"/>
    <property type="chains" value="A/B/C/D/E/F=32-289"/>
</dbReference>
<dbReference type="PDB" id="5YAK">
    <property type="method" value="X-ray"/>
    <property type="resolution" value="2.30 A"/>
    <property type="chains" value="A/B/C/D/E/F=32-289"/>
</dbReference>
<dbReference type="PDBsum" id="4TTB"/>
<dbReference type="PDBsum" id="4TTC"/>
<dbReference type="PDBsum" id="5YAK"/>
<dbReference type="SMR" id="Q6PHW0"/>
<dbReference type="BioGRID" id="133150">
    <property type="interactions" value="11"/>
</dbReference>
<dbReference type="FunCoup" id="Q6PHW0">
    <property type="interactions" value="5"/>
</dbReference>
<dbReference type="IntAct" id="Q6PHW0">
    <property type="interactions" value="4"/>
</dbReference>
<dbReference type="STRING" id="9606.ENSP00000229447"/>
<dbReference type="BindingDB" id="Q6PHW0"/>
<dbReference type="DrugBank" id="DB03374">
    <property type="generic name" value="3,5-Diiodotyrosine"/>
</dbReference>
<dbReference type="GlyGen" id="Q6PHW0">
    <property type="glycosylation" value="1 site, 1 O-linked glycan (1 site)"/>
</dbReference>
<dbReference type="iPTMnet" id="Q6PHW0"/>
<dbReference type="PhosphoSitePlus" id="Q6PHW0"/>
<dbReference type="BioMuta" id="IYD"/>
<dbReference type="DMDM" id="91207083"/>
<dbReference type="jPOST" id="Q6PHW0"/>
<dbReference type="MassIVE" id="Q6PHW0"/>
<dbReference type="PaxDb" id="9606-ENSP00000229447"/>
<dbReference type="PeptideAtlas" id="Q6PHW0"/>
<dbReference type="ProteomicsDB" id="10043"/>
<dbReference type="ProteomicsDB" id="67128">
    <molecule id="Q6PHW0-1"/>
</dbReference>
<dbReference type="ProteomicsDB" id="67129">
    <molecule id="Q6PHW0-3"/>
</dbReference>
<dbReference type="ProteomicsDB" id="67130">
    <molecule id="Q6PHW0-4"/>
</dbReference>
<dbReference type="ProteomicsDB" id="67131">
    <molecule id="Q6PHW0-5"/>
</dbReference>
<dbReference type="ProteomicsDB" id="67132">
    <molecule id="Q6PHW0-6"/>
</dbReference>
<dbReference type="ProteomicsDB" id="67133">
    <molecule id="Q6PHW0-7"/>
</dbReference>
<dbReference type="Antibodypedia" id="33325">
    <property type="antibodies" value="62 antibodies from 19 providers"/>
</dbReference>
<dbReference type="DNASU" id="389434"/>
<dbReference type="Ensembl" id="ENST00000229447.9">
    <molecule id="Q6PHW0-4"/>
    <property type="protein sequence ID" value="ENSP00000229447.5"/>
    <property type="gene ID" value="ENSG00000009765.15"/>
</dbReference>
<dbReference type="Ensembl" id="ENST00000344419.8">
    <molecule id="Q6PHW0-1"/>
    <property type="protein sequence ID" value="ENSP00000343763.4"/>
    <property type="gene ID" value="ENSG00000009765.15"/>
</dbReference>
<dbReference type="Ensembl" id="ENST00000367335.7">
    <molecule id="Q6PHW0-3"/>
    <property type="protein sequence ID" value="ENSP00000356304.3"/>
    <property type="gene ID" value="ENSG00000009765.15"/>
</dbReference>
<dbReference type="Ensembl" id="ENST00000392256.6">
    <molecule id="Q6PHW0-3"/>
    <property type="protein sequence ID" value="ENSP00000376085.2"/>
    <property type="gene ID" value="ENSG00000009765.15"/>
</dbReference>
<dbReference type="GeneID" id="389434"/>
<dbReference type="KEGG" id="hsa:389434"/>
<dbReference type="MANE-Select" id="ENST00000344419.8">
    <property type="protein sequence ID" value="ENSP00000343763.4"/>
    <property type="RefSeq nucleotide sequence ID" value="NM_203395.3"/>
    <property type="RefSeq protein sequence ID" value="NP_981932.1"/>
</dbReference>
<dbReference type="UCSC" id="uc003qnu.3">
    <molecule id="Q6PHW0-1"/>
    <property type="organism name" value="human"/>
</dbReference>
<dbReference type="AGR" id="HGNC:21071"/>
<dbReference type="CTD" id="389434"/>
<dbReference type="DisGeNET" id="389434"/>
<dbReference type="GeneCards" id="IYD"/>
<dbReference type="HGNC" id="HGNC:21071">
    <property type="gene designation" value="IYD"/>
</dbReference>
<dbReference type="HPA" id="ENSG00000009765">
    <property type="expression patterns" value="Tissue enriched (thyroid)"/>
</dbReference>
<dbReference type="MalaCards" id="IYD"/>
<dbReference type="MIM" id="274800">
    <property type="type" value="phenotype"/>
</dbReference>
<dbReference type="MIM" id="612025">
    <property type="type" value="gene"/>
</dbReference>
<dbReference type="neXtProt" id="NX_Q6PHW0"/>
<dbReference type="OpenTargets" id="ENSG00000009765"/>
<dbReference type="Orphanet" id="95716">
    <property type="disease" value="Familial thyroid dyshormonogenesis"/>
</dbReference>
<dbReference type="PharmGKB" id="PA162392352"/>
<dbReference type="VEuPathDB" id="HostDB:ENSG00000009765"/>
<dbReference type="eggNOG" id="KOG3936">
    <property type="taxonomic scope" value="Eukaryota"/>
</dbReference>
<dbReference type="GeneTree" id="ENSGT00390000004348"/>
<dbReference type="HOGENOM" id="CLU_070764_1_1_1"/>
<dbReference type="InParanoid" id="Q6PHW0"/>
<dbReference type="OMA" id="GANHQPW"/>
<dbReference type="OrthoDB" id="41362at2759"/>
<dbReference type="PAN-GO" id="Q6PHW0">
    <property type="GO annotations" value="4 GO annotations based on evolutionary models"/>
</dbReference>
<dbReference type="PhylomeDB" id="Q6PHW0"/>
<dbReference type="TreeFam" id="TF313415"/>
<dbReference type="BioCyc" id="MetaCyc:ENSG00000009765-MONOMER"/>
<dbReference type="BRENDA" id="1.21.1.1">
    <property type="organism ID" value="2681"/>
</dbReference>
<dbReference type="PathwayCommons" id="Q6PHW0"/>
<dbReference type="Reactome" id="R-HSA-209968">
    <property type="pathway name" value="Thyroxine biosynthesis"/>
</dbReference>
<dbReference type="SABIO-RK" id="Q6PHW0"/>
<dbReference type="SignaLink" id="Q6PHW0"/>
<dbReference type="SIGNOR" id="Q6PHW0"/>
<dbReference type="BioGRID-ORCS" id="389434">
    <property type="hits" value="156 hits in 1144 CRISPR screens"/>
</dbReference>
<dbReference type="ChiTaRS" id="IYD">
    <property type="organism name" value="human"/>
</dbReference>
<dbReference type="EvolutionaryTrace" id="Q6PHW0"/>
<dbReference type="GeneWiki" id="Iodotyrosine_deiodinase"/>
<dbReference type="GenomeRNAi" id="389434"/>
<dbReference type="Pharos" id="Q6PHW0">
    <property type="development level" value="Tbio"/>
</dbReference>
<dbReference type="PRO" id="PR:Q6PHW0"/>
<dbReference type="Proteomes" id="UP000005640">
    <property type="component" value="Chromosome 6"/>
</dbReference>
<dbReference type="RNAct" id="Q6PHW0">
    <property type="molecule type" value="protein"/>
</dbReference>
<dbReference type="Bgee" id="ENSG00000009765">
    <property type="expression patterns" value="Expressed in right lobe of thyroid gland and 92 other cell types or tissues"/>
</dbReference>
<dbReference type="ExpressionAtlas" id="Q6PHW0">
    <property type="expression patterns" value="baseline and differential"/>
</dbReference>
<dbReference type="GO" id="GO:0030659">
    <property type="term" value="C:cytoplasmic vesicle membrane"/>
    <property type="evidence" value="ECO:0000314"/>
    <property type="project" value="UniProtKB"/>
</dbReference>
<dbReference type="GO" id="GO:0005654">
    <property type="term" value="C:nucleoplasm"/>
    <property type="evidence" value="ECO:0000314"/>
    <property type="project" value="HPA"/>
</dbReference>
<dbReference type="GO" id="GO:0005886">
    <property type="term" value="C:plasma membrane"/>
    <property type="evidence" value="ECO:0000314"/>
    <property type="project" value="HPA"/>
</dbReference>
<dbReference type="GO" id="GO:0010181">
    <property type="term" value="F:FMN binding"/>
    <property type="evidence" value="ECO:0000314"/>
    <property type="project" value="UniProtKB"/>
</dbReference>
<dbReference type="GO" id="GO:0140616">
    <property type="term" value="F:iodotyrosine deiodinase activity"/>
    <property type="evidence" value="ECO:0000314"/>
    <property type="project" value="UniProtKB"/>
</dbReference>
<dbReference type="GO" id="GO:0016491">
    <property type="term" value="F:oxidoreductase activity"/>
    <property type="evidence" value="ECO:0000318"/>
    <property type="project" value="GO_Central"/>
</dbReference>
<dbReference type="GO" id="GO:0042403">
    <property type="term" value="P:thyroid hormone metabolic process"/>
    <property type="evidence" value="ECO:0000314"/>
    <property type="project" value="UniProtKB"/>
</dbReference>
<dbReference type="GO" id="GO:0006570">
    <property type="term" value="P:tyrosine metabolic process"/>
    <property type="evidence" value="ECO:0000314"/>
    <property type="project" value="UniProtKB"/>
</dbReference>
<dbReference type="CDD" id="cd02144">
    <property type="entry name" value="iodotyrosine_dehalogenase"/>
    <property type="match status" value="1"/>
</dbReference>
<dbReference type="DisProt" id="DP01741"/>
<dbReference type="FunFam" id="3.40.109.10:FF:000004">
    <property type="entry name" value="Iodotyrosine deiodinase 1"/>
    <property type="match status" value="1"/>
</dbReference>
<dbReference type="Gene3D" id="3.40.109.10">
    <property type="entry name" value="NADH Oxidase"/>
    <property type="match status" value="1"/>
</dbReference>
<dbReference type="InterPro" id="IPR029479">
    <property type="entry name" value="Nitroreductase"/>
</dbReference>
<dbReference type="InterPro" id="IPR000415">
    <property type="entry name" value="Nitroreductase-like"/>
</dbReference>
<dbReference type="InterPro" id="IPR050627">
    <property type="entry name" value="Nitroreductase/BluB"/>
</dbReference>
<dbReference type="PANTHER" id="PTHR23026:SF90">
    <property type="entry name" value="IODOTYROSINE DEIODINASE 1"/>
    <property type="match status" value="1"/>
</dbReference>
<dbReference type="PANTHER" id="PTHR23026">
    <property type="entry name" value="NADPH NITROREDUCTASE"/>
    <property type="match status" value="1"/>
</dbReference>
<dbReference type="Pfam" id="PF00881">
    <property type="entry name" value="Nitroreductase"/>
    <property type="match status" value="1"/>
</dbReference>
<dbReference type="SUPFAM" id="SSF55469">
    <property type="entry name" value="FMN-dependent nitroreductase-like"/>
    <property type="match status" value="1"/>
</dbReference>
<gene>
    <name evidence="10" type="primary">IYD</name>
    <name type="synonym">C6orf71</name>
    <name evidence="9" type="synonym">DEHAL1</name>
</gene>
<name>IYD1_HUMAN</name>
<feature type="chain" id="PRO_0000230278" description="Iodotyrosine deiodinase 1">
    <location>
        <begin position="1"/>
        <end position="289"/>
    </location>
</feature>
<feature type="transmembrane region" description="Helical" evidence="2">
    <location>
        <begin position="1"/>
        <end position="21"/>
    </location>
</feature>
<feature type="region of interest" description="Disordered" evidence="3">
    <location>
        <begin position="29"/>
        <end position="69"/>
    </location>
</feature>
<feature type="compositionally biased region" description="Basic and acidic residues" evidence="3">
    <location>
        <begin position="29"/>
        <end position="58"/>
    </location>
</feature>
<feature type="compositionally biased region" description="Acidic residues" evidence="3">
    <location>
        <begin position="59"/>
        <end position="69"/>
    </location>
</feature>
<feature type="binding site" evidence="7 15 16">
    <location>
        <begin position="100"/>
        <end position="104"/>
    </location>
    <ligand>
        <name>FMN</name>
        <dbReference type="ChEBI" id="CHEBI:58210"/>
    </ligand>
</feature>
<feature type="binding site" evidence="1">
    <location>
        <begin position="128"/>
        <end position="129"/>
    </location>
    <ligand>
        <name>FMN</name>
        <dbReference type="ChEBI" id="CHEBI:58210"/>
    </ligand>
</feature>
<feature type="binding site" evidence="7 16">
    <location>
        <position position="128"/>
    </location>
    <ligand>
        <name>FMN</name>
        <dbReference type="ChEBI" id="CHEBI:58210"/>
    </ligand>
</feature>
<feature type="binding site" evidence="16">
    <location>
        <position position="130"/>
    </location>
    <ligand>
        <name>3-iodo-L-tyrosine</name>
        <dbReference type="ChEBI" id="CHEBI:59898"/>
    </ligand>
</feature>
<feature type="binding site" evidence="7 16">
    <location>
        <position position="157"/>
    </location>
    <ligand>
        <name>3-iodo-L-tyrosine</name>
        <dbReference type="ChEBI" id="CHEBI:59898"/>
    </ligand>
</feature>
<feature type="binding site" evidence="7 16">
    <location>
        <position position="161"/>
    </location>
    <ligand>
        <name>3-iodo-L-tyrosine</name>
        <dbReference type="ChEBI" id="CHEBI:59898"/>
    </ligand>
</feature>
<feature type="binding site" evidence="7 16">
    <location>
        <position position="182"/>
    </location>
    <ligand>
        <name>3-iodo-L-tyrosine</name>
        <dbReference type="ChEBI" id="CHEBI:59898"/>
    </ligand>
</feature>
<feature type="binding site" evidence="7 15 16">
    <location>
        <begin position="237"/>
        <end position="239"/>
    </location>
    <ligand>
        <name>FMN</name>
        <dbReference type="ChEBI" id="CHEBI:58210"/>
    </ligand>
</feature>
<feature type="binding site" evidence="7 15 16">
    <location>
        <position position="279"/>
    </location>
    <ligand>
        <name>FMN</name>
        <dbReference type="ChEBI" id="CHEBI:58210"/>
    </ligand>
</feature>
<feature type="splice variant" id="VSP_017802" description="In isoform 7." evidence="13">
    <location>
        <begin position="1"/>
        <end position="55"/>
    </location>
</feature>
<feature type="splice variant" id="VSP_017803" description="In isoform 7." evidence="13">
    <original>QAEEDA</original>
    <variation>MKEADV</variation>
    <location>
        <begin position="56"/>
        <end position="61"/>
    </location>
</feature>
<feature type="splice variant" id="VSP_017805" description="In isoform 4." evidence="11">
    <original>NAGLVTVTTTPLNCGPRLRVLLGRPAHEKLLMLLPVGYPSKEATVPDLKRKPLDQIMVTV</original>
    <variation>VNNGITMRHQTARHRHLIEGPGRSSEACSKLSSQGCPECRSGDCHYHSSQLWPSTEGAPGPPRT</variation>
    <location>
        <begin position="230"/>
        <end position="289"/>
    </location>
</feature>
<feature type="splice variant" id="VSP_017806" description="In isoform 5." evidence="11">
    <original>NAGLVTVTTTPLNCGPRLRVLLGRPAHEKLLMLLPVGYPSKEATVPDLKRKPLDQ</original>
    <variation>VNNGITMRHQTARHRHLIEGPGRSSEACSKLSSQGRPGASAAGSLFHFAIEFAAP</variation>
    <location>
        <begin position="230"/>
        <end position="284"/>
    </location>
</feature>
<feature type="splice variant" id="VSP_017807" description="In isoform 6." evidence="12">
    <original>NAGLVTVTTTPLNCGPRLRVLLGRPAHEKLLMLLPVGYPSK</original>
    <variation>VNNGITMRHQTARHRHLIEGPGRSSEACSKLSSQGRPGFYC</variation>
    <location>
        <begin position="230"/>
        <end position="270"/>
    </location>
</feature>
<feature type="splice variant" id="VSP_017809" description="In isoform 3 and isoform 7." evidence="13">
    <original>NAGLVTVTTTPLNCGPRLR</original>
    <variation>VFGKIILKELALISFLNL</variation>
    <location>
        <begin position="230"/>
        <end position="248"/>
    </location>
</feature>
<feature type="splice variant" id="VSP_017810" description="In isoform 3 and isoform 7." evidence="13">
    <location>
        <begin position="249"/>
        <end position="289"/>
    </location>
</feature>
<feature type="splice variant" id="VSP_017812" description="In isoform 6." evidence="12">
    <location>
        <begin position="271"/>
        <end position="289"/>
    </location>
</feature>
<feature type="splice variant" id="VSP_017813" description="In isoform 5." evidence="11">
    <location>
        <begin position="285"/>
        <end position="289"/>
    </location>
</feature>
<feature type="sequence variant" id="VAR_045963" description="In TDH4; strongly reduces activity; does not respond to the increase of flavin mononucleotide concentration; dbSNP:rs121918138." evidence="6">
    <original>R</original>
    <variation>W</variation>
    <location>
        <position position="101"/>
    </location>
</feature>
<feature type="sequence variant" id="VAR_045964" description="In TDH4; strongly reduces activity; does not respond to the increase of flavin mononucleotide concentration." evidence="6">
    <original>FI</original>
    <variation>L</variation>
    <location>
        <begin position="105"/>
        <end position="106"/>
    </location>
</feature>
<feature type="sequence variant" id="VAR_045965" description="In TDH4; strongly reduces activity; marginally respond to the increase of flavin mononucleotide concentration; reduces protein stability; dbSNP:rs121918139." evidence="6">
    <original>I</original>
    <variation>T</variation>
    <location>
        <position position="116"/>
    </location>
</feature>
<feature type="sequence variant" id="VAR_025785" description="In dbSNP:rs17854906." evidence="5">
    <original>L</original>
    <variation>P</variation>
    <location>
        <position position="260"/>
    </location>
</feature>
<feature type="sequence variant" id="VAR_045966" description="In dbSNP:rs36063028.">
    <original>E</original>
    <variation>K</variation>
    <location>
        <position position="271"/>
    </location>
</feature>
<feature type="mutagenesis site" description="Strongly reduces activity." evidence="6">
    <original>R</original>
    <variation>A</variation>
    <location>
        <position position="101"/>
    </location>
</feature>
<feature type="mutagenesis site" description="Reduces activity." evidence="6">
    <original>R</original>
    <variation>H</variation>
    <location>
        <position position="101"/>
    </location>
</feature>
<feature type="mutagenesis site" description="Activity as the wild type." evidence="6">
    <original>F</original>
    <variation>A</variation>
    <location>
        <position position="105"/>
    </location>
</feature>
<feature type="mutagenesis site" description="Activity as the wild type." evidence="6">
    <original>F</original>
    <variation>Y</variation>
    <location>
        <position position="105"/>
    </location>
</feature>
<feature type="mutagenesis site" description="Activity as the wild type." evidence="6">
    <original>I</original>
    <variation>V</variation>
    <location>
        <position position="116"/>
    </location>
</feature>
<feature type="strand" evidence="19">
    <location>
        <begin position="73"/>
        <end position="75"/>
    </location>
</feature>
<feature type="strand" evidence="18">
    <location>
        <begin position="77"/>
        <end position="79"/>
    </location>
</feature>
<feature type="helix" evidence="19">
    <location>
        <begin position="83"/>
        <end position="98"/>
    </location>
</feature>
<feature type="helix" evidence="19">
    <location>
        <begin position="113"/>
        <end position="123"/>
    </location>
</feature>
<feature type="helix" evidence="19">
    <location>
        <begin position="129"/>
        <end position="131"/>
    </location>
</feature>
<feature type="strand" evidence="19">
    <location>
        <begin position="135"/>
        <end position="140"/>
    </location>
</feature>
<feature type="helix" evidence="19">
    <location>
        <begin position="143"/>
        <end position="162"/>
    </location>
</feature>
<feature type="helix" evidence="19">
    <location>
        <begin position="167"/>
        <end position="173"/>
    </location>
</feature>
<feature type="helix" evidence="19">
    <location>
        <begin position="174"/>
        <end position="176"/>
    </location>
</feature>
<feature type="helix" evidence="19">
    <location>
        <begin position="184"/>
        <end position="187"/>
    </location>
</feature>
<feature type="strand" evidence="19">
    <location>
        <begin position="189"/>
        <end position="201"/>
    </location>
</feature>
<feature type="strand" evidence="18">
    <location>
        <begin position="207"/>
        <end position="209"/>
    </location>
</feature>
<feature type="helix" evidence="19">
    <location>
        <begin position="213"/>
        <end position="230"/>
    </location>
</feature>
<feature type="helix" evidence="19">
    <location>
        <begin position="244"/>
        <end position="250"/>
    </location>
</feature>
<feature type="strand" evidence="19">
    <location>
        <begin position="257"/>
        <end position="266"/>
    </location>
</feature>
<feature type="strand" evidence="19">
    <location>
        <begin position="273"/>
        <end position="275"/>
    </location>
</feature>
<feature type="helix" evidence="19">
    <location>
        <begin position="282"/>
        <end position="284"/>
    </location>
</feature>
<feature type="strand" evidence="17">
    <location>
        <begin position="286"/>
        <end position="289"/>
    </location>
</feature>
<feature type="sequence conflict" description="In Ref. 1; AAP22073." evidence="14" ref="1">
    <original>C</original>
    <variation>R</variation>
    <location sequence="Q6PHW0-4">
        <position position="265"/>
    </location>
</feature>
<sequence length="289" mass="33360">MYFLTPILVAILCILVVWIFKNADRSMEKKKGEPRTRAEARPWVDEDLKDSSDLHQAEEDADEWQESEENVEHIPFSHNHYPEKEMVKRSQEFYELLNKRRSVRFISNEQVPMEVIDNVIRTAGTAPSGAHTEPWTFVVVKDPDVKHKIRKIIEEEEEINYMKRMGHRWVTDLKKLRTNWIKEYLDTAPILILIFKQVHGFAANGKKKVHYYNEISVSIACGILLAALQNAGLVTVTTTPLNCGPRLRVLLGRPAHEKLLMLLPVGYPSKEATVPDLKRKPLDQIMVTV</sequence>
<evidence type="ECO:0000250" key="1">
    <source>
        <dbReference type="UniProtKB" id="Q9DCX8"/>
    </source>
</evidence>
<evidence type="ECO:0000255" key="2"/>
<evidence type="ECO:0000256" key="3">
    <source>
        <dbReference type="SAM" id="MobiDB-lite"/>
    </source>
</evidence>
<evidence type="ECO:0000269" key="4">
    <source>
    </source>
</evidence>
<evidence type="ECO:0000269" key="5">
    <source>
    </source>
</evidence>
<evidence type="ECO:0000269" key="6">
    <source>
    </source>
</evidence>
<evidence type="ECO:0000269" key="7">
    <source>
    </source>
</evidence>
<evidence type="ECO:0000269" key="8">
    <source>
    </source>
</evidence>
<evidence type="ECO:0000303" key="9">
    <source>
    </source>
</evidence>
<evidence type="ECO:0000303" key="10">
    <source>
    </source>
</evidence>
<evidence type="ECO:0000303" key="11">
    <source ref="1"/>
</evidence>
<evidence type="ECO:0000303" key="12">
    <source ref="2"/>
</evidence>
<evidence type="ECO:0000303" key="13">
    <source ref="3"/>
</evidence>
<evidence type="ECO:0000305" key="14"/>
<evidence type="ECO:0007744" key="15">
    <source>
        <dbReference type="PDB" id="4TTB"/>
    </source>
</evidence>
<evidence type="ECO:0007744" key="16">
    <source>
        <dbReference type="PDB" id="4TTC"/>
    </source>
</evidence>
<evidence type="ECO:0007829" key="17">
    <source>
        <dbReference type="PDB" id="4TTB"/>
    </source>
</evidence>
<evidence type="ECO:0007829" key="18">
    <source>
        <dbReference type="PDB" id="4TTC"/>
    </source>
</evidence>
<evidence type="ECO:0007829" key="19">
    <source>
        <dbReference type="PDB" id="5YAK"/>
    </source>
</evidence>
<comment type="function">
    <text evidence="4 6 7 8">Catalyzes the dehalogenation of halotyrosines such as 3-bromo-L-tyrosine, 3-chloro-L-tyrosine, 3-iodo-L-tyrosine and 3,5-diiodo-L-tyrosine (PubMed:15289438, PubMed:18434651, PubMed:25395621, PubMed:28157283). During thyroid hormone biosynthesis, facilitates iodide salvage by catalysing the oxidative NADPH-dependent deiodination of the halogenated by-products of thyroid hormone production, monoiodotyrosine (L-MIT) and diiodotyrosine (L-DIT) (PubMed:15289438, PubMed:18434651). The scavanged iodide can then reenter the hormone-producing pathways (PubMed:15289438, PubMed:18434651). Acts more efficiently on 3-iodo-L-tyrosine than 3,5-diiodo-L-tyrosine (PubMed:15289438).</text>
</comment>
<comment type="catalytic activity">
    <reaction evidence="4 6 7 8">
        <text>2 iodide + L-tyrosine + 2 NADP(+) = 3,5-diiodo-L-tyrosine + 2 NADPH + H(+)</text>
        <dbReference type="Rhea" id="RHEA:32479"/>
        <dbReference type="ChEBI" id="CHEBI:15378"/>
        <dbReference type="ChEBI" id="CHEBI:16382"/>
        <dbReference type="ChEBI" id="CHEBI:57506"/>
        <dbReference type="ChEBI" id="CHEBI:57783"/>
        <dbReference type="ChEBI" id="CHEBI:58315"/>
        <dbReference type="ChEBI" id="CHEBI:58349"/>
        <dbReference type="EC" id="1.21.1.1"/>
    </reaction>
    <physiologicalReaction direction="right-to-left" evidence="4 6 7 8">
        <dbReference type="Rhea" id="RHEA:32481"/>
    </physiologicalReaction>
</comment>
<comment type="catalytic activity">
    <reaction evidence="4 6 7 8">
        <text>iodide + L-tyrosine + NADP(+) = 3-iodo-L-tyrosine + NADPH</text>
        <dbReference type="Rhea" id="RHEA:27453"/>
        <dbReference type="ChEBI" id="CHEBI:16382"/>
        <dbReference type="ChEBI" id="CHEBI:57783"/>
        <dbReference type="ChEBI" id="CHEBI:58315"/>
        <dbReference type="ChEBI" id="CHEBI:58349"/>
        <dbReference type="ChEBI" id="CHEBI:59898"/>
    </reaction>
    <physiologicalReaction direction="right-to-left" evidence="4 6 7 8">
        <dbReference type="Rhea" id="RHEA:27455"/>
    </physiologicalReaction>
</comment>
<comment type="catalytic activity">
    <reaction evidence="4 6 7 8">
        <text>3-iodo-L-tyrosine + iodide + NADP(+) = 3,5-diiodo-L-tyrosine + NADPH + H(+)</text>
        <dbReference type="Rhea" id="RHEA:27457"/>
        <dbReference type="ChEBI" id="CHEBI:15378"/>
        <dbReference type="ChEBI" id="CHEBI:16382"/>
        <dbReference type="ChEBI" id="CHEBI:57506"/>
        <dbReference type="ChEBI" id="CHEBI:57783"/>
        <dbReference type="ChEBI" id="CHEBI:58349"/>
        <dbReference type="ChEBI" id="CHEBI:59898"/>
    </reaction>
    <physiologicalReaction direction="right-to-left" evidence="4 6 7 8">
        <dbReference type="Rhea" id="RHEA:27459"/>
    </physiologicalReaction>
</comment>
<comment type="catalytic activity">
    <reaction evidence="7">
        <text>L-tyrosine + chloride + NADP(+) = 3-chloro-L-tyrosine + NADPH</text>
        <dbReference type="Rhea" id="RHEA:70343"/>
        <dbReference type="ChEBI" id="CHEBI:17996"/>
        <dbReference type="ChEBI" id="CHEBI:57783"/>
        <dbReference type="ChEBI" id="CHEBI:58315"/>
        <dbReference type="ChEBI" id="CHEBI:58349"/>
        <dbReference type="ChEBI" id="CHEBI:189422"/>
    </reaction>
    <physiologicalReaction direction="right-to-left" evidence="7">
        <dbReference type="Rhea" id="RHEA:70345"/>
    </physiologicalReaction>
</comment>
<comment type="catalytic activity">
    <reaction evidence="7">
        <text>bromide + L-tyrosine + NADP(+) = 3-bromo-L-tyrosine + NADPH</text>
        <dbReference type="Rhea" id="RHEA:70347"/>
        <dbReference type="ChEBI" id="CHEBI:15858"/>
        <dbReference type="ChEBI" id="CHEBI:57783"/>
        <dbReference type="ChEBI" id="CHEBI:58315"/>
        <dbReference type="ChEBI" id="CHEBI:58349"/>
        <dbReference type="ChEBI" id="CHEBI:189423"/>
    </reaction>
    <physiologicalReaction direction="right-to-left" evidence="7">
        <dbReference type="Rhea" id="RHEA:70349"/>
    </physiologicalReaction>
</comment>
<comment type="cofactor">
    <cofactor evidence="7 8">
        <name>FMN</name>
        <dbReference type="ChEBI" id="CHEBI:58210"/>
    </cofactor>
</comment>
<comment type="biophysicochemical properties">
    <kinetics>
        <KM evidence="4">2.67 uM for L-DIT</KM>
        <KM evidence="4">1.35 uM for L-MIT</KM>
        <KM evidence="8">7.3 uM for 3-iodo-L-tyrosine (at pH 7.4 and 25 degrees Celsius)</KM>
        <KM evidence="8">4.1 mM for 2-iodophenol (at pH 7.4 and 25 degrees Celsius)</KM>
        <text evidence="8">kcat is 0.102 sec(-1) for the dehalogenation of 3-iodo-L-tyrosine (at pH 7.4 and 25 degrees Celsius) (PubMed:28157283). kcat is 0.004 sec(-1) for the dehalogenation of 2-iodophenol (at pH 7.4 and 25 degrees Celsius) (PubMed:28157283).</text>
    </kinetics>
</comment>
<comment type="subunit">
    <text evidence="7">Homodimer.</text>
</comment>
<comment type="interaction">
    <interactant intactId="EBI-10253668">
        <id>Q6PHW0</id>
    </interactant>
    <interactant intactId="EBI-749955">
        <id>Q86WT6</id>
        <label>TRIM69</label>
    </interactant>
    <organismsDiffer>false</organismsDiffer>
    <experiments>3</experiments>
</comment>
<comment type="interaction">
    <interactant intactId="EBI-10253668">
        <id>Q6PHW0</id>
    </interactant>
    <interactant intactId="EBI-11525489">
        <id>Q86WT6-2</id>
        <label>TRIM69</label>
    </interactant>
    <organismsDiffer>false</organismsDiffer>
    <experiments>3</experiments>
</comment>
<comment type="subcellular location">
    <subcellularLocation>
        <location evidence="4">Cell membrane</location>
        <topology evidence="4">Single-pass membrane protein</topology>
    </subcellularLocation>
    <subcellularLocation>
        <location evidence="4">Cytoplasmic vesicle membrane</location>
    </subcellularLocation>
</comment>
<comment type="alternative products">
    <event type="alternative splicing"/>
    <isoform>
        <id>Q6PHW0-1</id>
        <name>1</name>
        <sequence type="displayed"/>
    </isoform>
    <isoform>
        <id>Q6PHW0-3</id>
        <name>3</name>
        <name>E</name>
        <sequence type="described" ref="VSP_017809 VSP_017810"/>
    </isoform>
    <isoform>
        <id>Q6PHW0-4</id>
        <name>4</name>
        <name>B</name>
        <sequence type="described" ref="VSP_017805"/>
    </isoform>
    <isoform>
        <id>Q6PHW0-5</id>
        <name>5</name>
        <name>C</name>
        <sequence type="described" ref="VSP_017806 VSP_017813"/>
    </isoform>
    <isoform>
        <id>Q6PHW0-6</id>
        <name>6</name>
        <name>D</name>
        <sequence type="described" ref="VSP_017807 VSP_017812"/>
    </isoform>
    <isoform>
        <id>Q6PHW0-7</id>
        <name>7</name>
        <name>F</name>
        <sequence type="described" ref="VSP_017802 VSP_017803 VSP_017809 VSP_017810"/>
    </isoform>
</comment>
<comment type="tissue specificity">
    <text evidence="4">Expressed at a high level in thyroid gland (at protein level). Expressed at a high level in thyroid gland and at lower level in kidney and trachea.</text>
</comment>
<comment type="disease" evidence="6">
    <disease id="DI-01403">
        <name>Thyroid dyshormonogenesis 4</name>
        <acronym>TDH4</acronym>
        <description>A disorder due to thyroid dyshormonogenesis, causing severe hypothyroidism, goiter, excessive levels of iodotyrosine in serum and urine, and variable mental deficits derived from unrecognized and untreated hypothyroidism.</description>
        <dbReference type="MIM" id="274800"/>
    </disease>
    <text>The disease is caused by variants affecting the gene represented in this entry.</text>
</comment>
<comment type="similarity">
    <text evidence="14">Belongs to the nitroreductase family.</text>
</comment>
<comment type="sequence caution" evidence="14">
    <conflict type="erroneous translation">
        <sequence resource="EMBL-CDS" id="AAY41467"/>
    </conflict>
</comment>
<comment type="sequence caution" evidence="14">
    <conflict type="erroneous initiation">
        <sequence resource="EMBL-CDS" id="BAC85255"/>
    </conflict>
    <text>Truncated N-terminus.</text>
</comment>
<proteinExistence type="evidence at protein level"/>
<protein>
    <recommendedName>
        <fullName evidence="10">Iodotyrosine deiodinase 1</fullName>
        <shortName evidence="10">IYD-1</shortName>
        <ecNumber evidence="4 6 7 8">1.21.1.1</ecNumber>
    </recommendedName>
    <alternativeName>
        <fullName evidence="9 12">Iodotyrosine dehalogenase 1</fullName>
    </alternativeName>
</protein>
<accession>Q6PHW0</accession>
<accession>C9JFW2</accession>
<accession>Q2VPW0</accession>
<accession>Q2VPW1</accession>
<accession>Q5F1L5</accession>
<accession>Q5F1L6</accession>
<accession>Q5THM4</accession>
<accession>Q6ZP69</accession>
<accession>Q7Z7D7</accession>
<accession>Q7Z7D8</accession>
<organism>
    <name type="scientific">Homo sapiens</name>
    <name type="common">Human</name>
    <dbReference type="NCBI Taxonomy" id="9606"/>
    <lineage>
        <taxon>Eukaryota</taxon>
        <taxon>Metazoa</taxon>
        <taxon>Chordata</taxon>
        <taxon>Craniata</taxon>
        <taxon>Vertebrata</taxon>
        <taxon>Euteleostomi</taxon>
        <taxon>Mammalia</taxon>
        <taxon>Eutheria</taxon>
        <taxon>Euarchontoglires</taxon>
        <taxon>Primates</taxon>
        <taxon>Haplorrhini</taxon>
        <taxon>Catarrhini</taxon>
        <taxon>Hominidae</taxon>
        <taxon>Homo</taxon>
    </lineage>
</organism>